<dbReference type="EC" id="3.6.4.-" evidence="4"/>
<dbReference type="EMBL" id="AY157498">
    <property type="protein sequence ID" value="AAN46164.1"/>
    <property type="molecule type" value="Genomic_DNA"/>
</dbReference>
<dbReference type="EMBL" id="CP000100">
    <property type="protein sequence ID" value="ABB57863.1"/>
    <property type="molecule type" value="Genomic_DNA"/>
</dbReference>
<dbReference type="RefSeq" id="WP_011244571.1">
    <property type="nucleotide sequence ID" value="NZ_JACJTX010000001.1"/>
</dbReference>
<dbReference type="SMR" id="Q8GJM5"/>
<dbReference type="STRING" id="1140.Synpcc7942_1833"/>
<dbReference type="PaxDb" id="1140-Synpcc7942_1833"/>
<dbReference type="KEGG" id="syf:Synpcc7942_1833"/>
<dbReference type="eggNOG" id="COG1192">
    <property type="taxonomic scope" value="Bacteria"/>
</dbReference>
<dbReference type="HOGENOM" id="CLU_037612_1_4_3"/>
<dbReference type="OrthoDB" id="479754at2"/>
<dbReference type="BioCyc" id="SYNEL:SYNPCC7942_1833-MONOMER"/>
<dbReference type="Proteomes" id="UP000889800">
    <property type="component" value="Chromosome"/>
</dbReference>
<dbReference type="GO" id="GO:0005737">
    <property type="term" value="C:cytoplasm"/>
    <property type="evidence" value="ECO:0007669"/>
    <property type="project" value="UniProtKB-SubCell"/>
</dbReference>
<dbReference type="GO" id="GO:0009295">
    <property type="term" value="C:nucleoid"/>
    <property type="evidence" value="ECO:0007669"/>
    <property type="project" value="UniProtKB-SubCell"/>
</dbReference>
<dbReference type="GO" id="GO:0005524">
    <property type="term" value="F:ATP binding"/>
    <property type="evidence" value="ECO:0007669"/>
    <property type="project" value="UniProtKB-KW"/>
</dbReference>
<dbReference type="GO" id="GO:0003677">
    <property type="term" value="F:DNA binding"/>
    <property type="evidence" value="ECO:0007669"/>
    <property type="project" value="UniProtKB-KW"/>
</dbReference>
<dbReference type="GO" id="GO:0016787">
    <property type="term" value="F:hydrolase activity"/>
    <property type="evidence" value="ECO:0007669"/>
    <property type="project" value="UniProtKB-KW"/>
</dbReference>
<dbReference type="GO" id="GO:0046872">
    <property type="term" value="F:metal ion binding"/>
    <property type="evidence" value="ECO:0007669"/>
    <property type="project" value="UniProtKB-KW"/>
</dbReference>
<dbReference type="GO" id="GO:0015977">
    <property type="term" value="P:carbon fixation"/>
    <property type="evidence" value="ECO:0007669"/>
    <property type="project" value="UniProtKB-KW"/>
</dbReference>
<dbReference type="CDD" id="cd02042">
    <property type="entry name" value="ParAB_family"/>
    <property type="match status" value="1"/>
</dbReference>
<dbReference type="Gene3D" id="3.40.50.300">
    <property type="entry name" value="P-loop containing nucleotide triphosphate hydrolases"/>
    <property type="match status" value="1"/>
</dbReference>
<dbReference type="InterPro" id="IPR025669">
    <property type="entry name" value="AAA_dom"/>
</dbReference>
<dbReference type="InterPro" id="IPR050678">
    <property type="entry name" value="DNA_Partitioning_ATPase"/>
</dbReference>
<dbReference type="InterPro" id="IPR027417">
    <property type="entry name" value="P-loop_NTPase"/>
</dbReference>
<dbReference type="PANTHER" id="PTHR13696:SF99">
    <property type="entry name" value="COBYRINIC ACID AC-DIAMIDE SYNTHASE"/>
    <property type="match status" value="1"/>
</dbReference>
<dbReference type="PANTHER" id="PTHR13696">
    <property type="entry name" value="P-LOOP CONTAINING NUCLEOSIDE TRIPHOSPHATE HYDROLASE"/>
    <property type="match status" value="1"/>
</dbReference>
<dbReference type="Pfam" id="PF13614">
    <property type="entry name" value="AAA_31"/>
    <property type="match status" value="1"/>
</dbReference>
<dbReference type="PIRSF" id="PIRSF009320">
    <property type="entry name" value="Nuc_binding_HP_1000"/>
    <property type="match status" value="1"/>
</dbReference>
<dbReference type="SUPFAM" id="SSF52540">
    <property type="entry name" value="P-loop containing nucleoside triphosphate hydrolases"/>
    <property type="match status" value="1"/>
</dbReference>
<gene>
    <name evidence="8" type="primary">mcdA</name>
    <name evidence="7" type="synonym">parA</name>
    <name evidence="13" type="synonym">SEN0014</name>
    <name evidence="14" type="ordered locus">Synpcc7942_1833</name>
</gene>
<protein>
    <recommendedName>
        <fullName evidence="8">Maintenance of carboxysome distribution protein A</fullName>
        <shortName evidence="8">McdA</shortName>
        <ecNumber evidence="4">3.6.4.-</ecNumber>
    </recommendedName>
</protein>
<name>MCDA_SYNE7</name>
<accession>Q8GJM5</accession>
<sequence length="252" mass="27293">MLTVTCASLSGGQGKTTTALFLGRSLAARGKRVLMIDADPQSSLSFYLGCELSSEQATLLEVLKKEVDVVDSLWNLDDRLALIPADDALDSAQDFLATSGMGAIVLRRRLSPLQDQFDFCVIDAPPQRSQLCMTSVGAADQLLIPAEASSKGLNSLLRTLDLVAEMSEVEAFQGQILGILPFRDRWLGRTQAKQSQKSLESMQEVAAGHPILPSILESEQFKKAIDQGVSLAALGYADLEYPFRTILEKLGC</sequence>
<reference evidence="13" key="1">
    <citation type="submission" date="2002-10" db="EMBL/GenBank/DDBJ databases">
        <title>Synechococcus elongatus PCC7942 cosmid 4G8.</title>
        <authorList>
            <person name="Holtman C.K."/>
            <person name="Sandoval P."/>
            <person name="Chen Y."/>
            <person name="Socias T."/>
            <person name="McMurtry S."/>
            <person name="Gonzalez A."/>
            <person name="Salinas I."/>
            <person name="Golden S.S."/>
            <person name="Youderian P."/>
        </authorList>
    </citation>
    <scope>NUCLEOTIDE SEQUENCE [GENOMIC DNA]</scope>
    <source>
        <strain>ATCC 33912 / PCC 7942 / FACHB-805</strain>
    </source>
</reference>
<reference evidence="14" key="2">
    <citation type="submission" date="2005-08" db="EMBL/GenBank/DDBJ databases">
        <title>Complete sequence of chromosome 1 of Synechococcus elongatus PCC 7942.</title>
        <authorList>
            <consortium name="US DOE Joint Genome Institute"/>
            <person name="Copeland A."/>
            <person name="Lucas S."/>
            <person name="Lapidus A."/>
            <person name="Barry K."/>
            <person name="Detter J.C."/>
            <person name="Glavina T."/>
            <person name="Hammon N."/>
            <person name="Israni S."/>
            <person name="Pitluck S."/>
            <person name="Schmutz J."/>
            <person name="Larimer F."/>
            <person name="Land M."/>
            <person name="Kyrpides N."/>
            <person name="Lykidis A."/>
            <person name="Golden S."/>
            <person name="Richardson P."/>
        </authorList>
    </citation>
    <scope>NUCLEOTIDE SEQUENCE [LARGE SCALE GENOMIC DNA]</scope>
    <source>
        <strain>ATCC 33912 / PCC 7942 / FACHB-805</strain>
    </source>
</reference>
<reference key="3">
    <citation type="journal article" date="2010" name="Science">
        <title>Spatially ordered dynamics of the bacterial carbon fixation machinery.</title>
        <authorList>
            <person name="Savage D.F."/>
            <person name="Afonso B."/>
            <person name="Chen A.H."/>
            <person name="Silver P.A."/>
        </authorList>
    </citation>
    <scope>FUNCTION</scope>
    <scope>SUBCELLULAR LOCATION</scope>
    <scope>DISRUPTION PHENOTYPE</scope>
    <source>
        <strain>ATCC 33912 / PCC 7942 / FACHB-805</strain>
    </source>
</reference>
<reference key="4">
    <citation type="journal article" date="2013" name="Cell">
        <title>Circadian control of global gene expression by the cyanobacterial master regulator RpaA.</title>
        <authorList>
            <person name="Markson J.S."/>
            <person name="Piechura J.R."/>
            <person name="Puszynska A.M."/>
            <person name="O'Shea E.K."/>
        </authorList>
    </citation>
    <scope>INDUCTION</scope>
    <source>
        <strain>ATCC 33912 / PCC 7942 / FACHB-805 / AMC408</strain>
    </source>
</reference>
<reference key="5">
    <citation type="journal article" date="2018" name="Elife">
        <title>Protein gradients on the nucleoid position the carbon-fixing organelles of cyanobacteria.</title>
        <authorList>
            <person name="MacCready J.S."/>
            <person name="Hakim P."/>
            <person name="Young E.J."/>
            <person name="Hu L."/>
            <person name="Liu J."/>
            <person name="Osteryoung K.W."/>
            <person name="Vecchiarelli A.G."/>
            <person name="Ducat D.C."/>
        </authorList>
    </citation>
    <scope>FUNCTION AS AN ATPASE</scope>
    <scope>SUBUNIT</scope>
    <scope>INTERACTION WITH MCDB</scope>
    <scope>DISRUPTION PHENOTYPE</scope>
    <source>
        <strain>ATCC 33912 / PCC 7942 / FACHB-805</strain>
    </source>
</reference>
<reference key="6">
    <citation type="journal article" date="2020" name="Mol. Biol. Evol.">
        <title>Origin and Evolution of Carboxysome Positioning Systems in Cyanobacteria.</title>
        <authorList>
            <person name="MacCready J.S."/>
            <person name="Basalla J.L."/>
            <person name="Vecchiarelli A.G."/>
        </authorList>
    </citation>
    <scope>CLASSIFICATION</scope>
    <source>
        <strain>ATCC 33912 / PCC 7942 / FACHB-805</strain>
    </source>
</reference>
<reference key="7">
    <citation type="journal article" date="2021" name="MBio">
        <title>Carboxysome Mispositioning Alters Growth, Morphology, and Rubisco Level of the Cyanobacterium Synechococcus elongatus PCC 7942.</title>
        <authorList>
            <person name="Rillema R."/>
            <person name="Hoang Y."/>
            <person name="MacCready J.S."/>
            <person name="Vecchiarelli A.G."/>
        </authorList>
    </citation>
    <scope>FUNCTION IN CELL PHYSIOLOGY</scope>
    <source>
        <strain>ATCC 33912 / PCC 7942 / FACHB-805</strain>
    </source>
</reference>
<reference key="8">
    <citation type="journal article" date="2021" name="Mol. Biol. Cell">
        <title>Dissection of the ATPase active site of McdA reveals the sequential steps essential for carboxysome distribution.</title>
        <authorList>
            <person name="Hakim P."/>
            <person name="Hoang Y."/>
            <person name="Vecchiarelli A.G."/>
        </authorList>
    </citation>
    <scope>FUNCTION</scope>
    <scope>SUBUNIT</scope>
    <scope>INTERACTION WITH MCDB</scope>
    <scope>SUBCELLULAR LOCATION</scope>
    <scope>MUTAGENESIS OF SER-10; GLY-11; LYS-15; ASP-39 AND LYS-151</scope>
    <source>
        <strain>ATCC 33912 / PCC 7942 / FACHB-805</strain>
    </source>
</reference>
<comment type="function">
    <text evidence="2 4 5 6">McdA and McdB together mediate carboxysome (Cb) spacing, size, ultrastructure and probably inheritance in the cell (PubMed:20203050, PubMed:30520729, PubMed:34340540, PubMed:34406783). Together they prevent Cb aggregation (PubMed:20203050, PubMed:30520729, PubMed:34340540, PubMed:34406783). McdA is an ATPase that forms dynamic gradients on the nucleoid in response to adapter protein McdB, which associates with carboxysomes (PubMed:30520729, PubMed:34406783). The interplay between McdA gradients on the nucleoid and McdB-bound carboxysomes result in the equal spacing of Cbs along the cell length (PubMed:30520729, PubMed:34406783). Binds nucleoid DNA in an ATP-dependent manner; neither ADP nor ATP-gamma-S support DNA binding (PubMed:30520729). Upon ATP-binding dimerizes and binds nucleoid DNA; the (McdA-ATP)2 dimer transiently binds McdB-bound Cbs (PubMed:34406783). McdA's ATPase activity is stimulated 2-fold by DNA and McdB; ATP hydrolysis causes McdA release from DNA (PubMed:30520729). Overexpression leads to loss of McdA oscillation, diffuse nucleoid staining by McdA with formation of large carboxysome aggregates that are in regions depleted of McdA; McdA remains nucleoid-associated (PubMed:30520729, PubMed:34406783).</text>
</comment>
<comment type="function">
    <text evidence="12">Mutagenesis studies (characterized in vivo) suggest ATP binding, protein dimerization and a conformational change are necessary for nucleoid DNA-binding and binding to McdB-bound Cbs, which tethers Cbs to the nucleoid (PubMed:34406783). Eventual McdB-stimulated ATP hydrolysis causes de-dimerization of McdA which no longer binds the nucleoid and releases McdB and Cbs (PubMed:34406783). McdB-bound Cbs then move to a region of higher McdA concentration, distributing Cbs across the nucleoid (PubMed:34406783).</text>
</comment>
<comment type="function">
    <text evidence="5">Incorrect positioning (aggregation) of carboxysomes results in reduced CO(2) fixation by encapsulated ribulose-1,5-bisphosphate carboxylase (RuBisCO, cbbL/cbbS), which leads to slower growth, cell elongation, asymmetric cell division and an increase in RuBisCO levels (PubMed:34340540).</text>
</comment>
<comment type="catalytic activity">
    <reaction evidence="4">
        <text>ATP + H2O = ADP + phosphate + H(+)</text>
        <dbReference type="Rhea" id="RHEA:13065"/>
        <dbReference type="ChEBI" id="CHEBI:15377"/>
        <dbReference type="ChEBI" id="CHEBI:15378"/>
        <dbReference type="ChEBI" id="CHEBI:30616"/>
        <dbReference type="ChEBI" id="CHEBI:43474"/>
        <dbReference type="ChEBI" id="CHEBI:456216"/>
    </reaction>
</comment>
<comment type="subunit">
    <text evidence="1 4 6">Self-associates (probably a homodimer), interacts with McdB probably via the C-terminus of both proteins (PubMed:30520729, PubMed:34406783). Shows no signs of filament formation (PubMed:30520729). Homodimerizes in the presence of ATP, making extra nucleotide contacts than with ADP or AMP-PNP. Each subunit binds 1 ATP molecule; Glu-147, Lys-151 and Arg-183 cross the dimer interface to contact ATP in the other subunit, while Phe-182, Arg-183 and Phe-221 stack with the adenine base in their own subunit.</text>
</comment>
<comment type="subcellular location">
    <subcellularLocation>
        <location evidence="2">Cytoplasm</location>
    </subcellularLocation>
    <subcellularLocation>
        <location evidence="4 6">Cytoplasm</location>
        <location evidence="4 6">Nucleoid</location>
    </subcellularLocation>
    <text evidence="2 4 6">Upon overexpression forms a thick, filament-like structures near one cell pole that disappear and reappear at the other pole with a period of 33 minutes (McdA-GFP fusion protein). The condensed polymer can appear between carboxysomes (PubMed:20203050). A different fusion protein (mNeonGreen-McdA) expressed from its endogenous promoter oscillates end-to-end in cells in 6-8 minutes and co-localizes with the nucleoid (PubMed:30520729, PubMed:34406783). Interacts with the nucleoid in an ATP-dependent manner (PubMed:30520729). In the absence of carboxysomes (a ccmK2LMNO operon deletion) or double mcdA-mcdB deletions, this protein is found diffused in the cytoplasm (PubMed:30520729).</text>
</comment>
<comment type="induction">
    <text evidence="3">Transcription is reproducibly circadian, under control of RpaA (PubMed:24315105).</text>
</comment>
<comment type="domain">
    <text evidence="1">Has an adenine-nucleotide sandwich dimer structure in common with ParA ATPases. Nucleotide-binding forces changes that create an ATP-binding pocket.</text>
</comment>
<comment type="disruption phenotype">
    <text evidence="2 4 5">Loss of carboxysome (Cb) spatial organization without a change in cell morphology (Cbs are usually regularly spaced along the central axis of the cell); Cb segregation to daughter cells (equal numbers in wild-type cells) becomes random, impairing daughter cell fitness (30 degrees Celsius, 37 umol photon m(-2) sec(-1), 16 hours light, 8 hours dark) (PubMed:20203050). McdB still associates with Cbs, which are irregularly spaced, have much larger size variation and cluster (32 degrees Celsis, 80 umol photon m(-2) sec(-1) constant light, 2% CO(2)) (PubMed:30520729). At 20, 30 or 40 degrees Celsius (60 umol photon m(-2) sec(-1) constant light, 2% CO(2)) Cbs lose regular spacing and instead form large aggregates, increased levels of RuBisCO at 20 and 30 degrees. Slower growth at high CO(2) but not in ambient air at 30 or 40 degrees Celsius, slower growth in high CO(2) or ambient air at 20 degrees Celsius (PubMed:34340540). This strain was isolated from freshwater that varies from 8 to 25 degrees Celsius annually (PubMed:34340540).</text>
</comment>
<comment type="miscellaneous">
    <text evidence="9">A type 1 McdA protein.</text>
</comment>
<comment type="similarity">
    <text evidence="11">Belongs to the ParA family. McdA subfamily.</text>
</comment>
<comment type="caution">
    <text evidence="2 4">Originally suggested to form filaments, this is probably a result of overexpression (PubMed:20203050, PubMed:30520729).</text>
</comment>
<keyword id="KW-0067">ATP-binding</keyword>
<keyword id="KW-0120">Carbon dioxide fixation</keyword>
<keyword id="KW-0963">Cytoplasm</keyword>
<keyword id="KW-0238">DNA-binding</keyword>
<keyword id="KW-0378">Hydrolase</keyword>
<keyword id="KW-0460">Magnesium</keyword>
<keyword id="KW-0479">Metal-binding</keyword>
<keyword id="KW-0547">Nucleotide-binding</keyword>
<keyword id="KW-1185">Reference proteome</keyword>
<feature type="chain" id="PRO_0000459777" description="Maintenance of carboxysome distribution protein A">
    <location>
        <begin position="1"/>
        <end position="252"/>
    </location>
</feature>
<feature type="binding site" evidence="1">
    <location>
        <position position="11"/>
    </location>
    <ligand>
        <name>ATP</name>
        <dbReference type="ChEBI" id="CHEBI:30616"/>
        <label>1</label>
    </ligand>
</feature>
<feature type="binding site" evidence="1">
    <location>
        <position position="12"/>
    </location>
    <ligand>
        <name>ATP</name>
        <dbReference type="ChEBI" id="CHEBI:30616"/>
        <label>1</label>
    </ligand>
</feature>
<feature type="binding site" evidence="1">
    <location>
        <position position="14"/>
    </location>
    <ligand>
        <name>ATP</name>
        <dbReference type="ChEBI" id="CHEBI:30616"/>
        <label>1</label>
    </ligand>
</feature>
<feature type="binding site" evidence="1">
    <location>
        <position position="15"/>
    </location>
    <ligand>
        <name>ATP</name>
        <dbReference type="ChEBI" id="CHEBI:30616"/>
        <label>1</label>
    </ligand>
</feature>
<feature type="binding site" evidence="1">
    <location>
        <position position="16"/>
    </location>
    <ligand>
        <name>ATP</name>
        <dbReference type="ChEBI" id="CHEBI:30616"/>
        <label>1</label>
    </ligand>
</feature>
<feature type="binding site" evidence="1">
    <location>
        <position position="16"/>
    </location>
    <ligand>
        <name>Mg(2+)</name>
        <dbReference type="ChEBI" id="CHEBI:18420"/>
    </ligand>
</feature>
<feature type="binding site" evidence="1">
    <location>
        <position position="17"/>
    </location>
    <ligand>
        <name>ATP</name>
        <dbReference type="ChEBI" id="CHEBI:30616"/>
        <label>1</label>
    </ligand>
</feature>
<feature type="binding site" evidence="1">
    <location>
        <position position="41"/>
    </location>
    <ligand>
        <name>ATP</name>
        <dbReference type="ChEBI" id="CHEBI:30616"/>
        <label>1</label>
    </ligand>
</feature>
<feature type="binding site" evidence="1">
    <location>
        <position position="147"/>
    </location>
    <ligand>
        <name>ATP</name>
        <dbReference type="ChEBI" id="CHEBI:30616"/>
        <label>2 in other subunit</label>
    </ligand>
</feature>
<feature type="binding site" evidence="1">
    <location>
        <position position="151"/>
    </location>
    <ligand>
        <name>ATP</name>
        <dbReference type="ChEBI" id="CHEBI:30616"/>
        <label>2 in other subunit</label>
    </ligand>
</feature>
<feature type="binding site" evidence="1">
    <location>
        <position position="182"/>
    </location>
    <ligand>
        <name>ATP</name>
        <dbReference type="ChEBI" id="CHEBI:30616"/>
        <label>1</label>
    </ligand>
</feature>
<feature type="binding site" evidence="1">
    <location>
        <position position="183"/>
    </location>
    <ligand>
        <name>ATP</name>
        <dbReference type="ChEBI" id="CHEBI:30616"/>
        <label>2 in other subunit</label>
    </ligand>
</feature>
<feature type="binding site" evidence="1">
    <location>
        <position position="216"/>
    </location>
    <ligand>
        <name>ATP</name>
        <dbReference type="ChEBI" id="CHEBI:30616"/>
        <label>1</label>
    </ligand>
</feature>
<feature type="binding site" evidence="1">
    <location>
        <position position="217"/>
    </location>
    <ligand>
        <name>ATP</name>
        <dbReference type="ChEBI" id="CHEBI:30616"/>
        <label>1</label>
    </ligand>
</feature>
<feature type="binding site" evidence="1">
    <location>
        <position position="218"/>
    </location>
    <ligand>
        <name>ATP</name>
        <dbReference type="ChEBI" id="CHEBI:30616"/>
        <label>1</label>
    </ligand>
</feature>
<feature type="site" description="McdA subfamily signature lysine residue" evidence="10">
    <location>
        <position position="151"/>
    </location>
</feature>
<feature type="mutagenesis site" description="Restores McdA association with carboxysomes (Cb) and their positioning, cells do not elongate, McdA no longer oscillates; when associated with S-151." evidence="6">
    <original>S</original>
    <variation>K</variation>
    <location>
        <position position="10"/>
    </location>
</feature>
<feature type="mutagenesis site" description="McdA does not associate with nucleoid, no longer oscillates in the cell, Cbs aggregate and abut the nucleoid, cells elongate, McdA probably does not dimerize." evidence="6">
    <original>G</original>
    <variation>V</variation>
    <location>
        <position position="11"/>
    </location>
</feature>
<feature type="mutagenesis site" description="McdA does not associate with nucleoid, no longer oscillates in the cell, Cbs aggregate and abut the nucleoid, cells elongate." evidence="6">
    <original>K</original>
    <variation>A</variation>
    <variation>Q</variation>
    <location>
        <position position="15"/>
    </location>
</feature>
<feature type="mutagenesis site" description="Locks Cbs on the nucleoid which are partially aggregated and enriched mid-cell, still nucleoid-bound when mcdB is deleted, might bind better to McdB, cells elongate but grow slower." evidence="6">
    <original>K</original>
    <variation>R</variation>
    <location>
        <position position="15"/>
    </location>
</feature>
<feature type="mutagenesis site" description="McdA does not associate with nucleoid, no longer oscillates in the cell, Cbs are mispositioned, cells elongate." evidence="6">
    <original>D</original>
    <variation>A</variation>
    <location>
        <position position="39"/>
    </location>
</feature>
<feature type="mutagenesis site" description="Most McdA is diffuse in cytoplasm, a small amount is associated with irregularly spaced Cb aggregates which abut nucleoids, cells elongate." evidence="6">
    <original>K</original>
    <variation>A</variation>
    <location>
        <position position="151"/>
    </location>
</feature>
<feature type="mutagenesis site" description="Most McdA is diffuse in cytoplasm, a small amount is associated with irregularly spaced Cb aggregates which abut nucleoids, cells elongate. Restores McdA association with carboxysomes (Cb) and their positioning, cells do not elongate; when associated with K-10." evidence="6">
    <original>K</original>
    <variation>S</variation>
    <location>
        <position position="151"/>
    </location>
</feature>
<proteinExistence type="evidence at protein level"/>
<organism>
    <name type="scientific">Synechococcus elongatus (strain ATCC 33912 / PCC 7942 / FACHB-805)</name>
    <name type="common">Anacystis nidulans R2</name>
    <dbReference type="NCBI Taxonomy" id="1140"/>
    <lineage>
        <taxon>Bacteria</taxon>
        <taxon>Bacillati</taxon>
        <taxon>Cyanobacteriota</taxon>
        <taxon>Cyanophyceae</taxon>
        <taxon>Synechococcales</taxon>
        <taxon>Synechococcaceae</taxon>
        <taxon>Synechococcus</taxon>
    </lineage>
</organism>
<evidence type="ECO:0000250" key="1">
    <source>
        <dbReference type="UniProtKB" id="B7KMS4"/>
    </source>
</evidence>
<evidence type="ECO:0000269" key="2">
    <source>
    </source>
</evidence>
<evidence type="ECO:0000269" key="3">
    <source>
    </source>
</evidence>
<evidence type="ECO:0000269" key="4">
    <source>
    </source>
</evidence>
<evidence type="ECO:0000269" key="5">
    <source>
    </source>
</evidence>
<evidence type="ECO:0000269" key="6">
    <source>
    </source>
</evidence>
<evidence type="ECO:0000303" key="7">
    <source>
    </source>
</evidence>
<evidence type="ECO:0000303" key="8">
    <source>
    </source>
</evidence>
<evidence type="ECO:0000303" key="9">
    <source>
    </source>
</evidence>
<evidence type="ECO:0000303" key="10">
    <source>
    </source>
</evidence>
<evidence type="ECO:0000305" key="11"/>
<evidence type="ECO:0000305" key="12">
    <source>
    </source>
</evidence>
<evidence type="ECO:0000312" key="13">
    <source>
        <dbReference type="EMBL" id="AAN46164.1"/>
    </source>
</evidence>
<evidence type="ECO:0000312" key="14">
    <source>
        <dbReference type="EMBL" id="ABB57863.1"/>
    </source>
</evidence>